<protein>
    <recommendedName>
        <fullName>Platelet-derived growth factor receptor-like protein</fullName>
        <shortName>PDGFR-like protein</shortName>
    </recommendedName>
</protein>
<sequence>MKVWLLLGLLLVHEALEDVTGQHLPKNKRPKEPGENRIKPTNKKVKPKIPKIKDRDSADSTPKTQSIMMQVLDKGRFQKPAATLSLLAGQSVELRCKGSRIGWSYPAYLDTFKDSRISVKQNERYGQLTLVNSTSADTGEFSCWGQLCSGYICRKDETKTGSTYIFFTEKGELFVPSPSYFDVVYLNPDRQAVVPCRVTVLSAKVTLHREFPAKEIPANGTDIVYDMKRGFVYLQPHSEHQGVVYCRAEAGGRSQISVKYQLLYVAVPSGPPSTTILASSNKVKSGDDVSVLCTVLGEPDVEVEFTWIFPGQKDERPVTIQDTWRLIHRGLGHTTRLSQSVITVEDFETIDAGYYICTAQNLQGQTTVATTVEFS</sequence>
<dbReference type="EMBL" id="AB220466">
    <property type="protein sequence ID" value="BAE72999.1"/>
    <property type="molecule type" value="mRNA"/>
</dbReference>
<dbReference type="RefSeq" id="NP_001271862.1">
    <property type="nucleotide sequence ID" value="NM_001284933.1"/>
</dbReference>
<dbReference type="STRING" id="9541.ENSMFAP00000019890"/>
<dbReference type="GlyCosmos" id="Q2PFX1">
    <property type="glycosylation" value="2 sites, No reported glycans"/>
</dbReference>
<dbReference type="eggNOG" id="KOG0200">
    <property type="taxonomic scope" value="Eukaryota"/>
</dbReference>
<dbReference type="Proteomes" id="UP000233100">
    <property type="component" value="Unplaced"/>
</dbReference>
<dbReference type="GO" id="GO:0005576">
    <property type="term" value="C:extracellular region"/>
    <property type="evidence" value="ECO:0007669"/>
    <property type="project" value="UniProtKB-SubCell"/>
</dbReference>
<dbReference type="FunFam" id="2.60.40.10:FF:000223">
    <property type="entry name" value="Platelet-derived growth factor receptor beta"/>
    <property type="match status" value="1"/>
</dbReference>
<dbReference type="FunFam" id="2.60.40.10:FF:000907">
    <property type="entry name" value="Platelet-derived growth factor receptor-like protein"/>
    <property type="match status" value="1"/>
</dbReference>
<dbReference type="FunFam" id="2.60.40.10:FF:001395">
    <property type="entry name" value="Platelet-derived growth factor receptor-like protein"/>
    <property type="match status" value="1"/>
</dbReference>
<dbReference type="Gene3D" id="2.60.40.10">
    <property type="entry name" value="Immunoglobulins"/>
    <property type="match status" value="3"/>
</dbReference>
<dbReference type="InterPro" id="IPR007110">
    <property type="entry name" value="Ig-like_dom"/>
</dbReference>
<dbReference type="InterPro" id="IPR036179">
    <property type="entry name" value="Ig-like_dom_sf"/>
</dbReference>
<dbReference type="InterPro" id="IPR013783">
    <property type="entry name" value="Ig-like_fold"/>
</dbReference>
<dbReference type="InterPro" id="IPR003599">
    <property type="entry name" value="Ig_sub"/>
</dbReference>
<dbReference type="InterPro" id="IPR003598">
    <property type="entry name" value="Ig_sub2"/>
</dbReference>
<dbReference type="InterPro" id="IPR042495">
    <property type="entry name" value="PDGFRL"/>
</dbReference>
<dbReference type="PANTHER" id="PTHR15360">
    <property type="entry name" value="PLATELET-DERIVED GROWTH FACTOR RECEPTOR LIKE"/>
    <property type="match status" value="1"/>
</dbReference>
<dbReference type="PANTHER" id="PTHR15360:SF1">
    <property type="entry name" value="PLATELET-DERIVED GROWTH FACTOR RECEPTOR-LIKE PROTEIN"/>
    <property type="match status" value="1"/>
</dbReference>
<dbReference type="Pfam" id="PF13927">
    <property type="entry name" value="Ig_3"/>
    <property type="match status" value="1"/>
</dbReference>
<dbReference type="Pfam" id="PF21339">
    <property type="entry name" value="VEGFR-1-like_Ig-like"/>
    <property type="match status" value="1"/>
</dbReference>
<dbReference type="SMART" id="SM00409">
    <property type="entry name" value="IG"/>
    <property type="match status" value="2"/>
</dbReference>
<dbReference type="SMART" id="SM00408">
    <property type="entry name" value="IGc2"/>
    <property type="match status" value="2"/>
</dbReference>
<dbReference type="SUPFAM" id="SSF48726">
    <property type="entry name" value="Immunoglobulin"/>
    <property type="match status" value="3"/>
</dbReference>
<dbReference type="PROSITE" id="PS50835">
    <property type="entry name" value="IG_LIKE"/>
    <property type="match status" value="2"/>
</dbReference>
<name>PGFRL_MACFA</name>
<reference key="1">
    <citation type="submission" date="2005-07" db="EMBL/GenBank/DDBJ databases">
        <title>Analysis of gene expression in cynomolgus monkey tissues by macaque cDNA oligo-chips.</title>
        <authorList>
            <person name="Kobayashi M."/>
            <person name="Tanuma R."/>
            <person name="Hirata M."/>
            <person name="Osada N."/>
            <person name="Kusuda J."/>
            <person name="Sugano S."/>
            <person name="Hashimoto K."/>
        </authorList>
    </citation>
    <scope>NUCLEOTIDE SEQUENCE [LARGE SCALE MRNA]</scope>
    <source>
        <tissue>Frontal cortex</tissue>
    </source>
</reference>
<keyword id="KW-1015">Disulfide bond</keyword>
<keyword id="KW-0325">Glycoprotein</keyword>
<keyword id="KW-0393">Immunoglobulin domain</keyword>
<keyword id="KW-1185">Reference proteome</keyword>
<keyword id="KW-0677">Repeat</keyword>
<keyword id="KW-0964">Secreted</keyword>
<keyword id="KW-0732">Signal</keyword>
<evidence type="ECO:0000250" key="1"/>
<evidence type="ECO:0000255" key="2"/>
<evidence type="ECO:0000255" key="3">
    <source>
        <dbReference type="PROSITE-ProRule" id="PRU00114"/>
    </source>
</evidence>
<evidence type="ECO:0000256" key="4">
    <source>
        <dbReference type="SAM" id="MobiDB-lite"/>
    </source>
</evidence>
<evidence type="ECO:0000305" key="5"/>
<organism>
    <name type="scientific">Macaca fascicularis</name>
    <name type="common">Crab-eating macaque</name>
    <name type="synonym">Cynomolgus monkey</name>
    <dbReference type="NCBI Taxonomy" id="9541"/>
    <lineage>
        <taxon>Eukaryota</taxon>
        <taxon>Metazoa</taxon>
        <taxon>Chordata</taxon>
        <taxon>Craniata</taxon>
        <taxon>Vertebrata</taxon>
        <taxon>Euteleostomi</taxon>
        <taxon>Mammalia</taxon>
        <taxon>Eutheria</taxon>
        <taxon>Euarchontoglires</taxon>
        <taxon>Primates</taxon>
        <taxon>Haplorrhini</taxon>
        <taxon>Catarrhini</taxon>
        <taxon>Cercopithecidae</taxon>
        <taxon>Cercopithecinae</taxon>
        <taxon>Macaca</taxon>
    </lineage>
</organism>
<proteinExistence type="evidence at transcript level"/>
<gene>
    <name type="primary">PDGFRL</name>
    <name type="ORF">QflA-15761</name>
</gene>
<accession>Q2PFX1</accession>
<comment type="subunit">
    <text evidence="1">Forms a complex composed of PDGFRL, TNK2 and GRB2.</text>
</comment>
<comment type="subcellular location">
    <subcellularLocation>
        <location evidence="5">Secreted</location>
    </subcellularLocation>
</comment>
<feature type="signal peptide" evidence="2">
    <location>
        <begin position="1"/>
        <end position="21"/>
    </location>
</feature>
<feature type="chain" id="PRO_0000233091" description="Platelet-derived growth factor receptor-like protein">
    <location>
        <begin position="22"/>
        <end position="375"/>
    </location>
</feature>
<feature type="domain" description="Ig-like C2-type 1">
    <location>
        <begin position="62"/>
        <end position="159"/>
    </location>
</feature>
<feature type="domain" description="Ig-like C2-type 2">
    <location>
        <begin position="272"/>
        <end position="375"/>
    </location>
</feature>
<feature type="region of interest" description="Disordered" evidence="4">
    <location>
        <begin position="22"/>
        <end position="64"/>
    </location>
</feature>
<feature type="compositionally biased region" description="Basic residues" evidence="4">
    <location>
        <begin position="40"/>
        <end position="50"/>
    </location>
</feature>
<feature type="glycosylation site" description="N-linked (GlcNAc...) asparagine" evidence="2">
    <location>
        <position position="132"/>
    </location>
</feature>
<feature type="glycosylation site" description="N-linked (GlcNAc...) asparagine" evidence="2">
    <location>
        <position position="219"/>
    </location>
</feature>
<feature type="disulfide bond" evidence="3">
    <location>
        <begin position="96"/>
        <end position="143"/>
    </location>
</feature>
<feature type="disulfide bond" evidence="3">
    <location>
        <begin position="293"/>
        <end position="357"/>
    </location>
</feature>